<feature type="chain" id="PRO_0000147557" description="Tetrahydromethanopterin S-methyltransferase subunit G">
    <location>
        <begin position="1"/>
        <end position="72"/>
    </location>
</feature>
<feature type="transmembrane region" description="Helical" evidence="2">
    <location>
        <begin position="48"/>
        <end position="68"/>
    </location>
</feature>
<reference key="1">
    <citation type="journal article" date="1998" name="FEBS Lett.">
        <title>Cloning, sequencing and expression of the genes encoding the sodium translocating N5-methyltetrahydromethanopterin:coenzyme M methyltransferase of the methylotrophic archaeon Methanosarcina mazei Go1.</title>
        <authorList>
            <person name="Lienard T."/>
            <person name="Gottschalk G."/>
        </authorList>
    </citation>
    <scope>NUCLEOTIDE SEQUENCE [GENOMIC DNA]</scope>
    <source>
        <strain>ATCC BAA-159 / DSM 3647 / Goe1 / Go1 / JCM 11833 / OCM 88</strain>
    </source>
</reference>
<reference key="2">
    <citation type="journal article" date="2002" name="J. Mol. Microbiol. Biotechnol.">
        <title>The genome of Methanosarcina mazei: evidence for lateral gene transfer between Bacteria and Archaea.</title>
        <authorList>
            <person name="Deppenmeier U."/>
            <person name="Johann A."/>
            <person name="Hartsch T."/>
            <person name="Merkl R."/>
            <person name="Schmitz R.A."/>
            <person name="Martinez-Arias R."/>
            <person name="Henne A."/>
            <person name="Wiezer A."/>
            <person name="Baeumer S."/>
            <person name="Jacobi C."/>
            <person name="Brueggemann H."/>
            <person name="Lienard T."/>
            <person name="Christmann A."/>
            <person name="Boemecke M."/>
            <person name="Steckel S."/>
            <person name="Bhattacharyya A."/>
            <person name="Lykidis A."/>
            <person name="Overbeek R."/>
            <person name="Klenk H.-P."/>
            <person name="Gunsalus R.P."/>
            <person name="Fritz H.-J."/>
            <person name="Gottschalk G."/>
        </authorList>
    </citation>
    <scope>NUCLEOTIDE SEQUENCE [LARGE SCALE GENOMIC DNA]</scope>
    <source>
        <strain>ATCC BAA-159 / DSM 3647 / Goe1 / Go1 / JCM 11833 / OCM 88</strain>
    </source>
</reference>
<reference key="3">
    <citation type="journal article" date="1996" name="Eur. J. Biochem.">
        <title>Sodium ion translocation by N5-methyltetrahydromethanopterin: coenzyme M methyltransferase from Methanosarcina mazei Go1 reconstituted in ether lipid liposomes.</title>
        <authorList>
            <person name="Lienard T."/>
            <person name="Becher B."/>
            <person name="Marschall M."/>
            <person name="Bowien S."/>
            <person name="Gottschalk G."/>
        </authorList>
    </citation>
    <scope>PROTEIN SEQUENCE OF 1-15</scope>
    <source>
        <strain>ATCC BAA-159 / DSM 3647 / Goe1 / Go1 / JCM 11833 / OCM 88</strain>
    </source>
</reference>
<sequence length="72" mass="8022">MDGKAPAAFVEPGEFNEVMKRLDQIDEKVEFVNSEVAQRIGKKVGRDIGILYGGVIGLLLFLIYVQISSMFM</sequence>
<evidence type="ECO:0000250" key="1"/>
<evidence type="ECO:0000255" key="2"/>
<evidence type="ECO:0000305" key="3"/>
<organism>
    <name type="scientific">Methanosarcina mazei (strain ATCC BAA-159 / DSM 3647 / Goe1 / Go1 / JCM 11833 / OCM 88)</name>
    <name type="common">Methanosarcina frisia</name>
    <dbReference type="NCBI Taxonomy" id="192952"/>
    <lineage>
        <taxon>Archaea</taxon>
        <taxon>Methanobacteriati</taxon>
        <taxon>Methanobacteriota</taxon>
        <taxon>Stenosarchaea group</taxon>
        <taxon>Methanomicrobia</taxon>
        <taxon>Methanosarcinales</taxon>
        <taxon>Methanosarcinaceae</taxon>
        <taxon>Methanosarcina</taxon>
    </lineage>
</organism>
<comment type="function">
    <text>Part of a complex that catalyzes the formation of methyl-coenzyme M and tetrahydromethanopterin from coenzyme M and methyl-tetrahydromethanopterin. This is an energy-conserving, sodium-ion translocating step.</text>
</comment>
<comment type="catalytic activity">
    <reaction>
        <text>5-methyl-5,6,7,8-tetrahydromethanopterin + coenzyme M + 2 Na(+)(in) = 5,6,7,8-tetrahydromethanopterin + methyl-coenzyme M + 2 Na(+)(out)</text>
        <dbReference type="Rhea" id="RHEA:53492"/>
        <dbReference type="ChEBI" id="CHEBI:29101"/>
        <dbReference type="ChEBI" id="CHEBI:58103"/>
        <dbReference type="ChEBI" id="CHEBI:58116"/>
        <dbReference type="ChEBI" id="CHEBI:58286"/>
        <dbReference type="ChEBI" id="CHEBI:58319"/>
        <dbReference type="EC" id="7.2.1.4"/>
    </reaction>
</comment>
<comment type="pathway">
    <text>One-carbon metabolism; methanogenesis from CO(2); methyl-coenzyme M from 5,10-methylene-5,6,7,8-tetrahydromethanopterin: step 2/2.</text>
</comment>
<comment type="subunit">
    <text evidence="1">The complex is composed of 8 subunits; MtrA, MtrB, MtrC, MtrD, MtrE, MtrF, MtrG and MtrH.</text>
</comment>
<comment type="subcellular location">
    <subcellularLocation>
        <location evidence="3">Cell membrane</location>
        <topology evidence="3">Single-pass membrane protein</topology>
    </subcellularLocation>
</comment>
<comment type="similarity">
    <text evidence="3">Belongs to the MtrG family.</text>
</comment>
<keyword id="KW-1003">Cell membrane</keyword>
<keyword id="KW-0903">Direct protein sequencing</keyword>
<keyword id="KW-0472">Membrane</keyword>
<keyword id="KW-0484">Methanogenesis</keyword>
<keyword id="KW-0489">Methyltransferase</keyword>
<keyword id="KW-0554">One-carbon metabolism</keyword>
<keyword id="KW-0808">Transferase</keyword>
<keyword id="KW-1278">Translocase</keyword>
<keyword id="KW-0812">Transmembrane</keyword>
<keyword id="KW-1133">Transmembrane helix</keyword>
<dbReference type="EC" id="7.2.1.4"/>
<dbReference type="EMBL" id="AF042381">
    <property type="protein sequence ID" value="AAC38336.1"/>
    <property type="molecule type" value="Genomic_DNA"/>
</dbReference>
<dbReference type="EMBL" id="AE008384">
    <property type="protein sequence ID" value="AAM31237.1"/>
    <property type="molecule type" value="Genomic_DNA"/>
</dbReference>
<dbReference type="RefSeq" id="WP_011033487.1">
    <property type="nucleotide sequence ID" value="NC_003901.1"/>
</dbReference>
<dbReference type="SMR" id="P80656"/>
<dbReference type="GeneID" id="82160591"/>
<dbReference type="KEGG" id="mma:MM_1541"/>
<dbReference type="PATRIC" id="fig|192952.21.peg.1782"/>
<dbReference type="eggNOG" id="arCOG03380">
    <property type="taxonomic scope" value="Archaea"/>
</dbReference>
<dbReference type="HOGENOM" id="CLU_191926_0_0_2"/>
<dbReference type="BRENDA" id="2.1.1.86">
    <property type="organism ID" value="3270"/>
</dbReference>
<dbReference type="UniPathway" id="UPA00640">
    <property type="reaction ID" value="UER00698"/>
</dbReference>
<dbReference type="Proteomes" id="UP000000595">
    <property type="component" value="Chromosome"/>
</dbReference>
<dbReference type="GO" id="GO:0005886">
    <property type="term" value="C:plasma membrane"/>
    <property type="evidence" value="ECO:0007669"/>
    <property type="project" value="UniProtKB-SubCell"/>
</dbReference>
<dbReference type="GO" id="GO:0030269">
    <property type="term" value="F:tetrahydromethanopterin S-methyltransferase activity"/>
    <property type="evidence" value="ECO:0007669"/>
    <property type="project" value="UniProtKB-UniRule"/>
</dbReference>
<dbReference type="GO" id="GO:0019386">
    <property type="term" value="P:methanogenesis, from carbon dioxide"/>
    <property type="evidence" value="ECO:0007669"/>
    <property type="project" value="UniProtKB-UniRule"/>
</dbReference>
<dbReference type="GO" id="GO:0032259">
    <property type="term" value="P:methylation"/>
    <property type="evidence" value="ECO:0007669"/>
    <property type="project" value="UniProtKB-KW"/>
</dbReference>
<dbReference type="GO" id="GO:0006730">
    <property type="term" value="P:one-carbon metabolic process"/>
    <property type="evidence" value="ECO:0007669"/>
    <property type="project" value="UniProtKB-UniRule"/>
</dbReference>
<dbReference type="HAMAP" id="MF_01500">
    <property type="entry name" value="MtrG"/>
    <property type="match status" value="1"/>
</dbReference>
<dbReference type="InterPro" id="IPR005866">
    <property type="entry name" value="THM_MeTrfase_su_G"/>
</dbReference>
<dbReference type="NCBIfam" id="TIGR01149">
    <property type="entry name" value="mtrG"/>
    <property type="match status" value="1"/>
</dbReference>
<dbReference type="Pfam" id="PF04210">
    <property type="entry name" value="MtrG"/>
    <property type="match status" value="1"/>
</dbReference>
<dbReference type="PIRSF" id="PIRSF006500">
    <property type="entry name" value="MtrG"/>
    <property type="match status" value="1"/>
</dbReference>
<gene>
    <name type="primary">mtrG</name>
    <name type="ordered locus">MM_1541</name>
</gene>
<accession>P80656</accession>
<accession>O59642</accession>
<name>MTRG_METMA</name>
<proteinExistence type="evidence at protein level"/>
<protein>
    <recommendedName>
        <fullName>Tetrahydromethanopterin S-methyltransferase subunit G</fullName>
        <ecNumber>7.2.1.4</ecNumber>
    </recommendedName>
    <alternativeName>
        <fullName>N5-methyltetrahydromethanopterin--coenzyme M methyltransferase subunit G</fullName>
    </alternativeName>
</protein>